<dbReference type="EMBL" id="CU928158">
    <property type="protein sequence ID" value="CAQ91327.1"/>
    <property type="molecule type" value="Genomic_DNA"/>
</dbReference>
<dbReference type="RefSeq" id="WP_000920719.1">
    <property type="nucleotide sequence ID" value="NC_011740.1"/>
</dbReference>
<dbReference type="KEGG" id="efe:EFER_3893"/>
<dbReference type="HOGENOM" id="CLU_032288_0_0_6"/>
<dbReference type="OrthoDB" id="9808671at2"/>
<dbReference type="Proteomes" id="UP000000745">
    <property type="component" value="Chromosome"/>
</dbReference>
<dbReference type="GO" id="GO:0005886">
    <property type="term" value="C:plasma membrane"/>
    <property type="evidence" value="ECO:0007669"/>
    <property type="project" value="UniProtKB-SubCell"/>
</dbReference>
<dbReference type="HAMAP" id="MF_00672">
    <property type="entry name" value="UPF0761"/>
    <property type="match status" value="1"/>
</dbReference>
<dbReference type="InterPro" id="IPR023679">
    <property type="entry name" value="UPF0761_bac"/>
</dbReference>
<dbReference type="InterPro" id="IPR017039">
    <property type="entry name" value="Virul_fac_BrkB"/>
</dbReference>
<dbReference type="NCBIfam" id="NF002457">
    <property type="entry name" value="PRK01637.1"/>
    <property type="match status" value="1"/>
</dbReference>
<dbReference type="NCBIfam" id="TIGR00765">
    <property type="entry name" value="yihY_not_rbn"/>
    <property type="match status" value="1"/>
</dbReference>
<dbReference type="PANTHER" id="PTHR30213">
    <property type="entry name" value="INNER MEMBRANE PROTEIN YHJD"/>
    <property type="match status" value="1"/>
</dbReference>
<dbReference type="PANTHER" id="PTHR30213:SF0">
    <property type="entry name" value="UPF0761 MEMBRANE PROTEIN YIHY"/>
    <property type="match status" value="1"/>
</dbReference>
<dbReference type="Pfam" id="PF03631">
    <property type="entry name" value="Virul_fac_BrkB"/>
    <property type="match status" value="1"/>
</dbReference>
<dbReference type="PIRSF" id="PIRSF035875">
    <property type="entry name" value="RNase_BN"/>
    <property type="match status" value="1"/>
</dbReference>
<organism>
    <name type="scientific">Escherichia fergusonii (strain ATCC 35469 / DSM 13698 / CCUG 18766 / IAM 14443 / JCM 21226 / LMG 7866 / NBRC 102419 / NCTC 12128 / CDC 0568-73)</name>
    <dbReference type="NCBI Taxonomy" id="585054"/>
    <lineage>
        <taxon>Bacteria</taxon>
        <taxon>Pseudomonadati</taxon>
        <taxon>Pseudomonadota</taxon>
        <taxon>Gammaproteobacteria</taxon>
        <taxon>Enterobacterales</taxon>
        <taxon>Enterobacteriaceae</taxon>
        <taxon>Escherichia</taxon>
    </lineage>
</organism>
<feature type="chain" id="PRO_1000131554" description="UPF0761 membrane protein YihY">
    <location>
        <begin position="1"/>
        <end position="290"/>
    </location>
</feature>
<feature type="transmembrane region" description="Helical" evidence="1">
    <location>
        <begin position="44"/>
        <end position="64"/>
    </location>
</feature>
<feature type="transmembrane region" description="Helical" evidence="1">
    <location>
        <begin position="104"/>
        <end position="124"/>
    </location>
</feature>
<feature type="transmembrane region" description="Helical" evidence="1">
    <location>
        <begin position="140"/>
        <end position="160"/>
    </location>
</feature>
<feature type="transmembrane region" description="Helical" evidence="1">
    <location>
        <begin position="183"/>
        <end position="203"/>
    </location>
</feature>
<feature type="transmembrane region" description="Helical" evidence="1">
    <location>
        <begin position="210"/>
        <end position="230"/>
    </location>
</feature>
<feature type="transmembrane region" description="Helical" evidence="1">
    <location>
        <begin position="244"/>
        <end position="264"/>
    </location>
</feature>
<comment type="subcellular location">
    <subcellularLocation>
        <location evidence="1">Cell inner membrane</location>
        <topology evidence="1">Multi-pass membrane protein</topology>
    </subcellularLocation>
</comment>
<comment type="similarity">
    <text evidence="1">Belongs to the UPF0761 family.</text>
</comment>
<name>YIHY_ESCF3</name>
<gene>
    <name evidence="1" type="primary">yihY</name>
    <name type="ordered locus">EFER_3893</name>
</gene>
<keyword id="KW-0997">Cell inner membrane</keyword>
<keyword id="KW-1003">Cell membrane</keyword>
<keyword id="KW-0472">Membrane</keyword>
<keyword id="KW-0812">Transmembrane</keyword>
<keyword id="KW-1133">Transmembrane helix</keyword>
<proteinExistence type="inferred from homology"/>
<reference key="1">
    <citation type="journal article" date="2009" name="PLoS Genet.">
        <title>Organised genome dynamics in the Escherichia coli species results in highly diverse adaptive paths.</title>
        <authorList>
            <person name="Touchon M."/>
            <person name="Hoede C."/>
            <person name="Tenaillon O."/>
            <person name="Barbe V."/>
            <person name="Baeriswyl S."/>
            <person name="Bidet P."/>
            <person name="Bingen E."/>
            <person name="Bonacorsi S."/>
            <person name="Bouchier C."/>
            <person name="Bouvet O."/>
            <person name="Calteau A."/>
            <person name="Chiapello H."/>
            <person name="Clermont O."/>
            <person name="Cruveiller S."/>
            <person name="Danchin A."/>
            <person name="Diard M."/>
            <person name="Dossat C."/>
            <person name="Karoui M.E."/>
            <person name="Frapy E."/>
            <person name="Garry L."/>
            <person name="Ghigo J.M."/>
            <person name="Gilles A.M."/>
            <person name="Johnson J."/>
            <person name="Le Bouguenec C."/>
            <person name="Lescat M."/>
            <person name="Mangenot S."/>
            <person name="Martinez-Jehanne V."/>
            <person name="Matic I."/>
            <person name="Nassif X."/>
            <person name="Oztas S."/>
            <person name="Petit M.A."/>
            <person name="Pichon C."/>
            <person name="Rouy Z."/>
            <person name="Ruf C.S."/>
            <person name="Schneider D."/>
            <person name="Tourret J."/>
            <person name="Vacherie B."/>
            <person name="Vallenet D."/>
            <person name="Medigue C."/>
            <person name="Rocha E.P.C."/>
            <person name="Denamur E."/>
        </authorList>
    </citation>
    <scope>NUCLEOTIDE SEQUENCE [LARGE SCALE GENOMIC DNA]</scope>
    <source>
        <strain>ATCC 35469 / DSM 13698 / BCRC 15582 / CCUG 18766 / IAM 14443 / JCM 21226 / LMG 7866 / NBRC 102419 / NCTC 12128 / CDC 0568-73</strain>
    </source>
</reference>
<protein>
    <recommendedName>
        <fullName evidence="1">UPF0761 membrane protein YihY</fullName>
    </recommendedName>
</protein>
<accession>B7LVG3</accession>
<evidence type="ECO:0000255" key="1">
    <source>
        <dbReference type="HAMAP-Rule" id="MF_00672"/>
    </source>
</evidence>
<sequence>MLKTIHEKARHHTRPLWAWLKLLWQRIDEDNMTTLAGNLAYVSLLSLVPLVAVVFALFAAFPMFSDVSIQLRHFIFANFLPATGDVIQQYIEQFVANSNKMTAVGACGLIVTALLLMYSIDSALNAIWRSKRVRPKIYSFAVYWMILTLGPLLAGASLAISSYLLSLRWASDLNTVIDNVLRIFPLLLSWISFWLLYSIVPTIRVPNRDAIVGAFVAALLFEAGKKGFALYITMFPSYQLIYGVLAVIPILFVWVYWTWCIVLLGAEITVTLGEYRKLKQAAEQEEDDEP</sequence>